<protein>
    <recommendedName>
        <fullName evidence="1">UDP-N-acetylmuramate--L-alanine ligase</fullName>
        <ecNumber evidence="1">6.3.2.8</ecNumber>
    </recommendedName>
    <alternativeName>
        <fullName evidence="1">UDP-N-acetylmuramoyl-L-alanine synthetase</fullName>
    </alternativeName>
</protein>
<organism>
    <name type="scientific">Acidiphilium cryptum (strain JF-5)</name>
    <dbReference type="NCBI Taxonomy" id="349163"/>
    <lineage>
        <taxon>Bacteria</taxon>
        <taxon>Pseudomonadati</taxon>
        <taxon>Pseudomonadota</taxon>
        <taxon>Alphaproteobacteria</taxon>
        <taxon>Acetobacterales</taxon>
        <taxon>Acidocellaceae</taxon>
        <taxon>Acidiphilium</taxon>
    </lineage>
</organism>
<gene>
    <name evidence="1" type="primary">murC</name>
    <name type="ordered locus">Acry_0064</name>
</gene>
<dbReference type="EC" id="6.3.2.8" evidence="1"/>
<dbReference type="EMBL" id="CP000697">
    <property type="protein sequence ID" value="ABQ29293.1"/>
    <property type="molecule type" value="Genomic_DNA"/>
</dbReference>
<dbReference type="RefSeq" id="WP_011941249.1">
    <property type="nucleotide sequence ID" value="NC_009484.1"/>
</dbReference>
<dbReference type="SMR" id="A5FUL1"/>
<dbReference type="STRING" id="349163.Acry_0064"/>
<dbReference type="KEGG" id="acr:Acry_0064"/>
<dbReference type="eggNOG" id="COG0773">
    <property type="taxonomic scope" value="Bacteria"/>
</dbReference>
<dbReference type="HOGENOM" id="CLU_028104_2_2_5"/>
<dbReference type="UniPathway" id="UPA00219"/>
<dbReference type="Proteomes" id="UP000000245">
    <property type="component" value="Chromosome"/>
</dbReference>
<dbReference type="GO" id="GO:0005737">
    <property type="term" value="C:cytoplasm"/>
    <property type="evidence" value="ECO:0007669"/>
    <property type="project" value="UniProtKB-SubCell"/>
</dbReference>
<dbReference type="GO" id="GO:0005524">
    <property type="term" value="F:ATP binding"/>
    <property type="evidence" value="ECO:0007669"/>
    <property type="project" value="UniProtKB-UniRule"/>
</dbReference>
<dbReference type="GO" id="GO:0008763">
    <property type="term" value="F:UDP-N-acetylmuramate-L-alanine ligase activity"/>
    <property type="evidence" value="ECO:0007669"/>
    <property type="project" value="UniProtKB-UniRule"/>
</dbReference>
<dbReference type="GO" id="GO:0051301">
    <property type="term" value="P:cell division"/>
    <property type="evidence" value="ECO:0007669"/>
    <property type="project" value="UniProtKB-KW"/>
</dbReference>
<dbReference type="GO" id="GO:0071555">
    <property type="term" value="P:cell wall organization"/>
    <property type="evidence" value="ECO:0007669"/>
    <property type="project" value="UniProtKB-KW"/>
</dbReference>
<dbReference type="GO" id="GO:0009252">
    <property type="term" value="P:peptidoglycan biosynthetic process"/>
    <property type="evidence" value="ECO:0007669"/>
    <property type="project" value="UniProtKB-UniRule"/>
</dbReference>
<dbReference type="GO" id="GO:0008360">
    <property type="term" value="P:regulation of cell shape"/>
    <property type="evidence" value="ECO:0007669"/>
    <property type="project" value="UniProtKB-KW"/>
</dbReference>
<dbReference type="Gene3D" id="3.90.190.20">
    <property type="entry name" value="Mur ligase, C-terminal domain"/>
    <property type="match status" value="1"/>
</dbReference>
<dbReference type="Gene3D" id="3.40.1190.10">
    <property type="entry name" value="Mur-like, catalytic domain"/>
    <property type="match status" value="1"/>
</dbReference>
<dbReference type="Gene3D" id="3.40.50.720">
    <property type="entry name" value="NAD(P)-binding Rossmann-like Domain"/>
    <property type="match status" value="1"/>
</dbReference>
<dbReference type="HAMAP" id="MF_00046">
    <property type="entry name" value="MurC"/>
    <property type="match status" value="1"/>
</dbReference>
<dbReference type="InterPro" id="IPR036565">
    <property type="entry name" value="Mur-like_cat_sf"/>
</dbReference>
<dbReference type="InterPro" id="IPR004101">
    <property type="entry name" value="Mur_ligase_C"/>
</dbReference>
<dbReference type="InterPro" id="IPR036615">
    <property type="entry name" value="Mur_ligase_C_dom_sf"/>
</dbReference>
<dbReference type="InterPro" id="IPR013221">
    <property type="entry name" value="Mur_ligase_cen"/>
</dbReference>
<dbReference type="InterPro" id="IPR000713">
    <property type="entry name" value="Mur_ligase_N"/>
</dbReference>
<dbReference type="InterPro" id="IPR050061">
    <property type="entry name" value="MurCDEF_pg_biosynth"/>
</dbReference>
<dbReference type="InterPro" id="IPR005758">
    <property type="entry name" value="UDP-N-AcMur_Ala_ligase_MurC"/>
</dbReference>
<dbReference type="NCBIfam" id="TIGR01082">
    <property type="entry name" value="murC"/>
    <property type="match status" value="1"/>
</dbReference>
<dbReference type="PANTHER" id="PTHR43445:SF3">
    <property type="entry name" value="UDP-N-ACETYLMURAMATE--L-ALANINE LIGASE"/>
    <property type="match status" value="1"/>
</dbReference>
<dbReference type="PANTHER" id="PTHR43445">
    <property type="entry name" value="UDP-N-ACETYLMURAMATE--L-ALANINE LIGASE-RELATED"/>
    <property type="match status" value="1"/>
</dbReference>
<dbReference type="Pfam" id="PF01225">
    <property type="entry name" value="Mur_ligase"/>
    <property type="match status" value="1"/>
</dbReference>
<dbReference type="Pfam" id="PF02875">
    <property type="entry name" value="Mur_ligase_C"/>
    <property type="match status" value="1"/>
</dbReference>
<dbReference type="Pfam" id="PF08245">
    <property type="entry name" value="Mur_ligase_M"/>
    <property type="match status" value="1"/>
</dbReference>
<dbReference type="SUPFAM" id="SSF51984">
    <property type="entry name" value="MurCD N-terminal domain"/>
    <property type="match status" value="1"/>
</dbReference>
<dbReference type="SUPFAM" id="SSF53623">
    <property type="entry name" value="MurD-like peptide ligases, catalytic domain"/>
    <property type="match status" value="1"/>
</dbReference>
<dbReference type="SUPFAM" id="SSF53244">
    <property type="entry name" value="MurD-like peptide ligases, peptide-binding domain"/>
    <property type="match status" value="1"/>
</dbReference>
<name>MURC_ACICJ</name>
<sequence>MRAMPLSIGTIHFVGIAGIGMSGIAEVLHNLGYSVQGSDLSENANVARLRAAGIPVAIGHDAANLGNAQVVVVSTAVPRDNPEVQAARKRMIPVVRRAEMLGELMRLRWSVAIGGTHGKTTTTSLVAAVLEGAGLDPTVINGGIINAYGTNARLGGGDWMVVEADESDGSFLRLPAVIAVVTNMDPEHLDHWGSAEAMEAGYRQFVSNIPFYGFAVLCIDHPGVQRMIPDLSDHRLITYGLSPQADVRAERIMSDRNGATFEVRLSERVAGRERVLAPMRLPMLGNHNVQNALAAIAIGIEMEVPEVDLRAALASFRGVKRRFTKTGEVAGITVIDDYGHHPVEIAAVLRAARQAGARDVIAVVQPHRYTRLATLFEDFCTCMNDAGKVIVADVYPAGEEPIPGIDRDALVEGLRARGHKSVVSLGSPDHLAEMINAMARAGDYVVCLGAGSITNWAQALPNQLQALIETTRRGAGGMR</sequence>
<keyword id="KW-0067">ATP-binding</keyword>
<keyword id="KW-0131">Cell cycle</keyword>
<keyword id="KW-0132">Cell division</keyword>
<keyword id="KW-0133">Cell shape</keyword>
<keyword id="KW-0961">Cell wall biogenesis/degradation</keyword>
<keyword id="KW-0963">Cytoplasm</keyword>
<keyword id="KW-0436">Ligase</keyword>
<keyword id="KW-0547">Nucleotide-binding</keyword>
<keyword id="KW-0573">Peptidoglycan synthesis</keyword>
<keyword id="KW-1185">Reference proteome</keyword>
<feature type="chain" id="PRO_1000004303" description="UDP-N-acetylmuramate--L-alanine ligase">
    <location>
        <begin position="1"/>
        <end position="479"/>
    </location>
</feature>
<feature type="binding site" evidence="1">
    <location>
        <begin position="115"/>
        <end position="121"/>
    </location>
    <ligand>
        <name>ATP</name>
        <dbReference type="ChEBI" id="CHEBI:30616"/>
    </ligand>
</feature>
<comment type="function">
    <text evidence="1">Cell wall formation.</text>
</comment>
<comment type="catalytic activity">
    <reaction evidence="1">
        <text>UDP-N-acetyl-alpha-D-muramate + L-alanine + ATP = UDP-N-acetyl-alpha-D-muramoyl-L-alanine + ADP + phosphate + H(+)</text>
        <dbReference type="Rhea" id="RHEA:23372"/>
        <dbReference type="ChEBI" id="CHEBI:15378"/>
        <dbReference type="ChEBI" id="CHEBI:30616"/>
        <dbReference type="ChEBI" id="CHEBI:43474"/>
        <dbReference type="ChEBI" id="CHEBI:57972"/>
        <dbReference type="ChEBI" id="CHEBI:70757"/>
        <dbReference type="ChEBI" id="CHEBI:83898"/>
        <dbReference type="ChEBI" id="CHEBI:456216"/>
        <dbReference type="EC" id="6.3.2.8"/>
    </reaction>
</comment>
<comment type="pathway">
    <text evidence="1">Cell wall biogenesis; peptidoglycan biosynthesis.</text>
</comment>
<comment type="subcellular location">
    <subcellularLocation>
        <location evidence="1">Cytoplasm</location>
    </subcellularLocation>
</comment>
<comment type="similarity">
    <text evidence="1">Belongs to the MurCDEF family.</text>
</comment>
<evidence type="ECO:0000255" key="1">
    <source>
        <dbReference type="HAMAP-Rule" id="MF_00046"/>
    </source>
</evidence>
<reference key="1">
    <citation type="submission" date="2007-05" db="EMBL/GenBank/DDBJ databases">
        <title>Complete sequence of chromosome of Acidiphilium cryptum JF-5.</title>
        <authorList>
            <consortium name="US DOE Joint Genome Institute"/>
            <person name="Copeland A."/>
            <person name="Lucas S."/>
            <person name="Lapidus A."/>
            <person name="Barry K."/>
            <person name="Detter J.C."/>
            <person name="Glavina del Rio T."/>
            <person name="Hammon N."/>
            <person name="Israni S."/>
            <person name="Dalin E."/>
            <person name="Tice H."/>
            <person name="Pitluck S."/>
            <person name="Sims D."/>
            <person name="Brettin T."/>
            <person name="Bruce D."/>
            <person name="Han C."/>
            <person name="Schmutz J."/>
            <person name="Larimer F."/>
            <person name="Land M."/>
            <person name="Hauser L."/>
            <person name="Kyrpides N."/>
            <person name="Kim E."/>
            <person name="Magnuson T."/>
            <person name="Richardson P."/>
        </authorList>
    </citation>
    <scope>NUCLEOTIDE SEQUENCE [LARGE SCALE GENOMIC DNA]</scope>
    <source>
        <strain>JF-5</strain>
    </source>
</reference>
<accession>A5FUL1</accession>
<proteinExistence type="inferred from homology"/>